<dbReference type="EMBL" id="CP000744">
    <property type="protein sequence ID" value="ABR81979.1"/>
    <property type="molecule type" value="Genomic_DNA"/>
</dbReference>
<dbReference type="RefSeq" id="WP_003082651.1">
    <property type="nucleotide sequence ID" value="NC_009656.1"/>
</dbReference>
<dbReference type="SMR" id="A6V8R5"/>
<dbReference type="KEGG" id="pap:PSPA7_4096"/>
<dbReference type="HOGENOM" id="CLU_155118_2_0_6"/>
<dbReference type="Proteomes" id="UP000001582">
    <property type="component" value="Chromosome"/>
</dbReference>
<dbReference type="Gene3D" id="3.10.510.20">
    <property type="entry name" value="YcgL domain"/>
    <property type="match status" value="1"/>
</dbReference>
<dbReference type="HAMAP" id="MF_01866">
    <property type="entry name" value="UPF0745"/>
    <property type="match status" value="1"/>
</dbReference>
<dbReference type="InterPro" id="IPR038068">
    <property type="entry name" value="YcgL-like_sf"/>
</dbReference>
<dbReference type="InterPro" id="IPR027354">
    <property type="entry name" value="YcgL_dom"/>
</dbReference>
<dbReference type="PANTHER" id="PTHR38109">
    <property type="entry name" value="PROTEIN YCGL"/>
    <property type="match status" value="1"/>
</dbReference>
<dbReference type="PANTHER" id="PTHR38109:SF1">
    <property type="entry name" value="PROTEIN YCGL"/>
    <property type="match status" value="1"/>
</dbReference>
<dbReference type="Pfam" id="PF05166">
    <property type="entry name" value="YcgL"/>
    <property type="match status" value="1"/>
</dbReference>
<dbReference type="SUPFAM" id="SSF160191">
    <property type="entry name" value="YcgL-like"/>
    <property type="match status" value="1"/>
</dbReference>
<dbReference type="PROSITE" id="PS51648">
    <property type="entry name" value="YCGL"/>
    <property type="match status" value="1"/>
</dbReference>
<name>Y4096_PSEP7</name>
<gene>
    <name type="ordered locus">PSPA7_4096</name>
</gene>
<protein>
    <recommendedName>
        <fullName evidence="1">YcgL domain-containing protein PSPA7_4096</fullName>
    </recommendedName>
</protein>
<proteinExistence type="inferred from homology"/>
<sequence>MKRICSVYKSPRKNEMYLYVDKREALSRVPEALLVPFGAPQHVFDLLLTPERQLAREDVAKVLENIEKQGFHLQMPPGEEEYIEHLPEELLRMNDPL</sequence>
<feature type="chain" id="PRO_0000375329" description="YcgL domain-containing protein PSPA7_4096">
    <location>
        <begin position="1"/>
        <end position="97"/>
    </location>
</feature>
<feature type="domain" description="YcgL" evidence="1">
    <location>
        <begin position="3"/>
        <end position="87"/>
    </location>
</feature>
<reference key="1">
    <citation type="submission" date="2007-06" db="EMBL/GenBank/DDBJ databases">
        <authorList>
            <person name="Dodson R.J."/>
            <person name="Harkins D."/>
            <person name="Paulsen I.T."/>
        </authorList>
    </citation>
    <scope>NUCLEOTIDE SEQUENCE [LARGE SCALE GENOMIC DNA]</scope>
    <source>
        <strain>DSM 24068 / PA7</strain>
    </source>
</reference>
<evidence type="ECO:0000255" key="1">
    <source>
        <dbReference type="HAMAP-Rule" id="MF_01866"/>
    </source>
</evidence>
<organism>
    <name type="scientific">Pseudomonas paraeruginosa (strain DSM 24068 / PA7)</name>
    <name type="common">Pseudomonas aeruginosa (strain PA7)</name>
    <dbReference type="NCBI Taxonomy" id="381754"/>
    <lineage>
        <taxon>Bacteria</taxon>
        <taxon>Pseudomonadati</taxon>
        <taxon>Pseudomonadota</taxon>
        <taxon>Gammaproteobacteria</taxon>
        <taxon>Pseudomonadales</taxon>
        <taxon>Pseudomonadaceae</taxon>
        <taxon>Pseudomonas</taxon>
        <taxon>Pseudomonas paraeruginosa</taxon>
    </lineage>
</organism>
<accession>A6V8R5</accession>